<keyword id="KW-0131">Cell cycle</keyword>
<keyword id="KW-0132">Cell division</keyword>
<keyword id="KW-0195">Cyclin</keyword>
<keyword id="KW-0539">Nucleus</keyword>
<keyword id="KW-0597">Phosphoprotein</keyword>
<keyword id="KW-1185">Reference proteome</keyword>
<keyword id="KW-0832">Ubl conjugation</keyword>
<sequence>MPRERDSTDHSNMKEEGGSDLSVRSRKRKANVAVFLQDPDEEIAKIDKTVKSEDSSQPWDDNSACVDPCSFIPTPNKEEDNELEYPRTAFQPRKIRPPRASPLPVLNWGNREEVWRIMLNKEKTYLRDEHFLQRHPLLQARMRAVLLDWLMEVCEVYKLHRETFYLAQDFFDRYMASQHNIIKTLLQLIGISALFIASKLEEIYPPKLHQFAYVTDGACSGDEILTMELMMMKALKWRLSPLTIVSWLNVYVQVAYVNDTGEVLMPQYPQQVFVQIAELLDLCVLDVGCLEFPYGVLAASALYHFSSLELMQKVSGYQWCDIEKCVKWMVPFAMVIREMGSSKLKHFRGVPMEDSHNIQTHTNSLDLLDKAQAKKAILSEQNRISPPPSVVLTPPPSSKKQSSEQETE</sequence>
<evidence type="ECO:0000250" key="1">
    <source>
        <dbReference type="UniProtKB" id="P24864"/>
    </source>
</evidence>
<evidence type="ECO:0000256" key="2">
    <source>
        <dbReference type="SAM" id="MobiDB-lite"/>
    </source>
</evidence>
<evidence type="ECO:0000269" key="3">
    <source>
    </source>
</evidence>
<evidence type="ECO:0000305" key="4"/>
<organism>
    <name type="scientific">Mus musculus</name>
    <name type="common">Mouse</name>
    <dbReference type="NCBI Taxonomy" id="10090"/>
    <lineage>
        <taxon>Eukaryota</taxon>
        <taxon>Metazoa</taxon>
        <taxon>Chordata</taxon>
        <taxon>Craniata</taxon>
        <taxon>Vertebrata</taxon>
        <taxon>Euteleostomi</taxon>
        <taxon>Mammalia</taxon>
        <taxon>Eutheria</taxon>
        <taxon>Euarchontoglires</taxon>
        <taxon>Glires</taxon>
        <taxon>Rodentia</taxon>
        <taxon>Myomorpha</taxon>
        <taxon>Muroidea</taxon>
        <taxon>Muridae</taxon>
        <taxon>Murinae</taxon>
        <taxon>Mus</taxon>
        <taxon>Mus</taxon>
    </lineage>
</organism>
<gene>
    <name type="primary">Ccne1</name>
    <name type="synonym">Ccne</name>
</gene>
<comment type="function">
    <text>Essential for the control of the cell cycle at the G1/S (start) transition.</text>
</comment>
<comment type="subunit">
    <text evidence="1 3">Interacts with CDK2 protein kinase to form a serine/threonine kinase holoenzyme complex. The cyclin subunit imparts substrate specificity to the complex. Part of a complex consisting of UHRF2, CDK2 and CCNE1. Interacts directly with UHRF2; the interaction ubiquitinates CCNE1 and appears to occur independently of CCNE1 phosphorylation (By similarity). Found in a complex with CDK2, CABLES1 and CCNA1 (PubMed:11585773). Interacts with INCA1 (By similarity).</text>
</comment>
<comment type="interaction">
    <interactant intactId="EBI-643090">
        <id>Q61457</id>
    </interactant>
    <interactant intactId="EBI-846949">
        <id>P11440</id>
        <label>Cdk1</label>
    </interactant>
    <organismsDiffer>false</organismsDiffer>
    <experiments>3</experiments>
</comment>
<comment type="interaction">
    <interactant intactId="EBI-643090">
        <id>Q61457</id>
    </interactant>
    <interactant intactId="EBI-847048">
        <id>P97377</id>
        <label>Cdk2</label>
    </interactant>
    <organismsDiffer>false</organismsDiffer>
    <experiments>3</experiments>
</comment>
<comment type="subcellular location">
    <subcellularLocation>
        <location evidence="1">Nucleus</location>
    </subcellularLocation>
</comment>
<comment type="tissue specificity">
    <text>Found in adult spleen, and to a lesser extent in adult testis and brain.</text>
</comment>
<comment type="PTM">
    <text evidence="1">Phosphorylation of both Thr-393 by GSK3 and Ser-397 by CDK2 creates a high affinity degron recognized by FBXW7, and accelerates degradation via the ubiquitin proteasome pathway. Phosphorylation at Thr-74 creates a low affinity degron also recognized by FBXW7 (By similarity).</text>
</comment>
<comment type="PTM">
    <text evidence="1">Ubiquitinated by UHRF2; appears to occur independently of phosphorylation.</text>
</comment>
<comment type="similarity">
    <text evidence="4">Belongs to the cyclin family. Cyclin E subfamily.</text>
</comment>
<comment type="sequence caution" evidence="4">
    <conflict type="frameshift">
        <sequence resource="EMBL-CDS" id="CAA53482"/>
    </conflict>
</comment>
<reference key="1">
    <citation type="journal article" date="1994" name="Biochem. Biophys. Res. Commun.">
        <title>Molecular cloning and characterization of murine cyclin E.</title>
        <authorList>
            <person name="Damjanov I."/>
            <person name="Shan J."/>
            <person name="Wang R.F."/>
            <person name="Damjanov A."/>
            <person name="Deloia J.A."/>
        </authorList>
    </citation>
    <scope>NUCLEOTIDE SEQUENCE [MRNA]</scope>
    <source>
        <strain>129/J</strain>
    </source>
</reference>
<reference key="2">
    <citation type="journal article" date="2004" name="Genome Res.">
        <title>The status, quality, and expansion of the NIH full-length cDNA project: the Mammalian Gene Collection (MGC).</title>
        <authorList>
            <consortium name="The MGC Project Team"/>
        </authorList>
    </citation>
    <scope>NUCLEOTIDE SEQUENCE [LARGE SCALE MRNA]</scope>
    <source>
        <tissue>Embryo</tissue>
        <tissue>Limb</tissue>
    </source>
</reference>
<reference key="3">
    <citation type="journal article" date="2001" name="Cancer Res.">
        <title>Cables enhances cdk2 tyrosine 15 phosphorylation by Wee1, inhibits cell growth, and is lost in many human colon and squamous cancers.</title>
        <authorList>
            <person name="Wu C.-L."/>
            <person name="Kirley S.D."/>
            <person name="Xiao H."/>
            <person name="Chuang Y."/>
            <person name="Chung D.C."/>
            <person name="Zukerberg L.R."/>
        </authorList>
    </citation>
    <scope>IDENTIFICATION IN A COMPLEX WITH CDK2; CCNA1 AND CABLES1</scope>
</reference>
<protein>
    <recommendedName>
        <fullName>G1/S-specific cyclin-E1</fullName>
    </recommendedName>
</protein>
<accession>Q61457</accession>
<accession>Q05BA1</accession>
<accession>Q05BA6</accession>
<accession>Q05BB7</accession>
<proteinExistence type="evidence at protein level"/>
<dbReference type="EMBL" id="X75888">
    <property type="protein sequence ID" value="CAA53482.1"/>
    <property type="status" value="ALT_FRAME"/>
    <property type="molecule type" value="mRNA"/>
</dbReference>
<dbReference type="EMBL" id="BC062152">
    <property type="protein sequence ID" value="AAH62152.1"/>
    <property type="molecule type" value="mRNA"/>
</dbReference>
<dbReference type="EMBL" id="BC084588">
    <property type="protein sequence ID" value="AAH84588.1"/>
    <property type="molecule type" value="mRNA"/>
</dbReference>
<dbReference type="EMBL" id="BC106191">
    <property type="protein sequence ID" value="AAI06192.1"/>
    <property type="molecule type" value="mRNA"/>
</dbReference>
<dbReference type="CCDS" id="CCDS39914.1"/>
<dbReference type="PIR" id="JC2497">
    <property type="entry name" value="JC2497"/>
</dbReference>
<dbReference type="RefSeq" id="NP_031659.2">
    <property type="nucleotide sequence ID" value="NM_007633.2"/>
</dbReference>
<dbReference type="SMR" id="Q61457"/>
<dbReference type="BioGRID" id="198552">
    <property type="interactions" value="11"/>
</dbReference>
<dbReference type="ComplexPortal" id="CPX-2081">
    <property type="entry name" value="Cyclin E1-CDK2 complex"/>
</dbReference>
<dbReference type="DIP" id="DIP-45868N"/>
<dbReference type="ELM" id="Q61457"/>
<dbReference type="FunCoup" id="Q61457">
    <property type="interactions" value="1289"/>
</dbReference>
<dbReference type="IntAct" id="Q61457">
    <property type="interactions" value="3"/>
</dbReference>
<dbReference type="MINT" id="Q61457"/>
<dbReference type="STRING" id="10090.ENSMUSP00000103658"/>
<dbReference type="iPTMnet" id="Q61457"/>
<dbReference type="PhosphoSitePlus" id="Q61457"/>
<dbReference type="PaxDb" id="10090-ENSMUSP00000103658"/>
<dbReference type="ProteomicsDB" id="281252"/>
<dbReference type="Pumba" id="Q61457"/>
<dbReference type="Antibodypedia" id="3286">
    <property type="antibodies" value="1209 antibodies from 49 providers"/>
</dbReference>
<dbReference type="DNASU" id="12447"/>
<dbReference type="Ensembl" id="ENSMUST00000108023.10">
    <property type="protein sequence ID" value="ENSMUSP00000103658.4"/>
    <property type="gene ID" value="ENSMUSG00000002068.17"/>
</dbReference>
<dbReference type="GeneID" id="12447"/>
<dbReference type="KEGG" id="mmu:12447"/>
<dbReference type="UCSC" id="uc009gkr.1">
    <property type="organism name" value="mouse"/>
</dbReference>
<dbReference type="AGR" id="MGI:88316"/>
<dbReference type="CTD" id="898"/>
<dbReference type="MGI" id="MGI:88316">
    <property type="gene designation" value="Ccne1"/>
</dbReference>
<dbReference type="VEuPathDB" id="HostDB:ENSMUSG00000002068"/>
<dbReference type="eggNOG" id="KOG0655">
    <property type="taxonomic scope" value="Eukaryota"/>
</dbReference>
<dbReference type="GeneTree" id="ENSGT00940000156256"/>
<dbReference type="HOGENOM" id="CLU_020695_8_0_1"/>
<dbReference type="InParanoid" id="Q61457"/>
<dbReference type="OMA" id="KMEMTRK"/>
<dbReference type="OrthoDB" id="5590282at2759"/>
<dbReference type="PhylomeDB" id="Q61457"/>
<dbReference type="TreeFam" id="TF101005"/>
<dbReference type="Reactome" id="R-MMU-1538133">
    <property type="pathway name" value="G0 and Early G1"/>
</dbReference>
<dbReference type="Reactome" id="R-MMU-187577">
    <property type="pathway name" value="SCF(Skp2)-mediated degradation of p27/p21"/>
</dbReference>
<dbReference type="Reactome" id="R-MMU-2559586">
    <property type="pathway name" value="DNA Damage/Telomere Stress Induced Senescence"/>
</dbReference>
<dbReference type="Reactome" id="R-MMU-6804116">
    <property type="pathway name" value="TP53 Regulates Transcription of Genes Involved in G1 Cell Cycle Arrest"/>
</dbReference>
<dbReference type="Reactome" id="R-MMU-69017">
    <property type="pathway name" value="CDK-mediated phosphorylation and removal of Cdc6"/>
</dbReference>
<dbReference type="Reactome" id="R-MMU-69200">
    <property type="pathway name" value="Phosphorylation of proteins involved in G1/S transition by active Cyclin E:Cdk2 complexes"/>
</dbReference>
<dbReference type="Reactome" id="R-MMU-69202">
    <property type="pathway name" value="Cyclin E associated events during G1/S transition"/>
</dbReference>
<dbReference type="Reactome" id="R-MMU-69231">
    <property type="pathway name" value="Cyclin D associated events in G1"/>
</dbReference>
<dbReference type="Reactome" id="R-MMU-69563">
    <property type="pathway name" value="p53-Dependent G1 DNA Damage Response"/>
</dbReference>
<dbReference type="Reactome" id="R-MMU-8849470">
    <property type="pathway name" value="PTK6 Regulates Cell Cycle"/>
</dbReference>
<dbReference type="Reactome" id="R-MMU-9706019">
    <property type="pathway name" value="RHOBTB3 ATPase cycle"/>
</dbReference>
<dbReference type="BioGRID-ORCS" id="12447">
    <property type="hits" value="5 hits in 82 CRISPR screens"/>
</dbReference>
<dbReference type="ChiTaRS" id="Ccne1">
    <property type="organism name" value="mouse"/>
</dbReference>
<dbReference type="PRO" id="PR:Q61457"/>
<dbReference type="Proteomes" id="UP000000589">
    <property type="component" value="Chromosome 7"/>
</dbReference>
<dbReference type="RNAct" id="Q61457">
    <property type="molecule type" value="protein"/>
</dbReference>
<dbReference type="Bgee" id="ENSMUSG00000002068">
    <property type="expression patterns" value="Expressed in ectoplacental cone and 242 other cell types or tissues"/>
</dbReference>
<dbReference type="ExpressionAtlas" id="Q61457">
    <property type="expression patterns" value="baseline and differential"/>
</dbReference>
<dbReference type="GO" id="GO:0097134">
    <property type="term" value="C:cyclin E1-CDK2 complex"/>
    <property type="evidence" value="ECO:0000314"/>
    <property type="project" value="MGI"/>
</dbReference>
<dbReference type="GO" id="GO:0000307">
    <property type="term" value="C:cyclin-dependent protein kinase holoenzyme complex"/>
    <property type="evidence" value="ECO:0000353"/>
    <property type="project" value="MGI"/>
</dbReference>
<dbReference type="GO" id="GO:0005654">
    <property type="term" value="C:nucleoplasm"/>
    <property type="evidence" value="ECO:0007669"/>
    <property type="project" value="Ensembl"/>
</dbReference>
<dbReference type="GO" id="GO:0005634">
    <property type="term" value="C:nucleus"/>
    <property type="evidence" value="ECO:0000314"/>
    <property type="project" value="MGI"/>
</dbReference>
<dbReference type="GO" id="GO:0016538">
    <property type="term" value="F:cyclin-dependent protein serine/threonine kinase regulator activity"/>
    <property type="evidence" value="ECO:0000314"/>
    <property type="project" value="MGI"/>
</dbReference>
<dbReference type="GO" id="GO:0016301">
    <property type="term" value="F:kinase activity"/>
    <property type="evidence" value="ECO:0000314"/>
    <property type="project" value="MGI"/>
</dbReference>
<dbReference type="GO" id="GO:0019901">
    <property type="term" value="F:protein kinase binding"/>
    <property type="evidence" value="ECO:0000353"/>
    <property type="project" value="MGI"/>
</dbReference>
<dbReference type="GO" id="GO:0051301">
    <property type="term" value="P:cell division"/>
    <property type="evidence" value="ECO:0007669"/>
    <property type="project" value="UniProtKB-KW"/>
</dbReference>
<dbReference type="GO" id="GO:0070192">
    <property type="term" value="P:chromosome organization involved in meiotic cell cycle"/>
    <property type="evidence" value="ECO:0000316"/>
    <property type="project" value="MGI"/>
</dbReference>
<dbReference type="GO" id="GO:0006270">
    <property type="term" value="P:DNA replication initiation"/>
    <property type="evidence" value="ECO:0000315"/>
    <property type="project" value="MGI"/>
</dbReference>
<dbReference type="GO" id="GO:0000082">
    <property type="term" value="P:G1/S transition of mitotic cell cycle"/>
    <property type="evidence" value="ECO:0007669"/>
    <property type="project" value="Ensembl"/>
</dbReference>
<dbReference type="GO" id="GO:0007129">
    <property type="term" value="P:homologous chromosome pairing at meiosis"/>
    <property type="evidence" value="ECO:0000316"/>
    <property type="project" value="MGI"/>
</dbReference>
<dbReference type="GO" id="GO:0000122">
    <property type="term" value="P:negative regulation of transcription by RNA polymerase II"/>
    <property type="evidence" value="ECO:0000316"/>
    <property type="project" value="MGI"/>
</dbReference>
<dbReference type="GO" id="GO:1902462">
    <property type="term" value="P:positive regulation of mesenchymal stem cell proliferation"/>
    <property type="evidence" value="ECO:0007669"/>
    <property type="project" value="Ensembl"/>
</dbReference>
<dbReference type="GO" id="GO:0051726">
    <property type="term" value="P:regulation of cell cycle"/>
    <property type="evidence" value="ECO:0000314"/>
    <property type="project" value="MGI"/>
</dbReference>
<dbReference type="GO" id="GO:0032880">
    <property type="term" value="P:regulation of protein localization"/>
    <property type="evidence" value="ECO:0000316"/>
    <property type="project" value="MGI"/>
</dbReference>
<dbReference type="GO" id="GO:0000723">
    <property type="term" value="P:telomere maintenance"/>
    <property type="evidence" value="ECO:0000316"/>
    <property type="project" value="MGI"/>
</dbReference>
<dbReference type="GO" id="GO:0016055">
    <property type="term" value="P:Wnt signaling pathway"/>
    <property type="evidence" value="ECO:0000314"/>
    <property type="project" value="MGI"/>
</dbReference>
<dbReference type="CDD" id="cd20581">
    <property type="entry name" value="CYCLIN_CCNE1_rpt2"/>
    <property type="match status" value="1"/>
</dbReference>
<dbReference type="FunFam" id="1.10.472.10:FF:000024">
    <property type="entry name" value="G1/S-specific cyclin-E1"/>
    <property type="match status" value="1"/>
</dbReference>
<dbReference type="FunFam" id="1.10.472.10:FF:000140">
    <property type="entry name" value="G1/S-specific cyclin-E1"/>
    <property type="match status" value="1"/>
</dbReference>
<dbReference type="Gene3D" id="1.10.472.10">
    <property type="entry name" value="Cyclin-like"/>
    <property type="match status" value="2"/>
</dbReference>
<dbReference type="InterPro" id="IPR039361">
    <property type="entry name" value="Cyclin"/>
</dbReference>
<dbReference type="InterPro" id="IPR013763">
    <property type="entry name" value="Cyclin-like_dom"/>
</dbReference>
<dbReference type="InterPro" id="IPR036915">
    <property type="entry name" value="Cyclin-like_sf"/>
</dbReference>
<dbReference type="InterPro" id="IPR004367">
    <property type="entry name" value="Cyclin_C-dom"/>
</dbReference>
<dbReference type="InterPro" id="IPR006671">
    <property type="entry name" value="Cyclin_N"/>
</dbReference>
<dbReference type="InterPro" id="IPR048258">
    <property type="entry name" value="Cyclins_cyclin-box"/>
</dbReference>
<dbReference type="PANTHER" id="PTHR10177">
    <property type="entry name" value="CYCLINS"/>
    <property type="match status" value="1"/>
</dbReference>
<dbReference type="Pfam" id="PF02984">
    <property type="entry name" value="Cyclin_C"/>
    <property type="match status" value="1"/>
</dbReference>
<dbReference type="Pfam" id="PF00134">
    <property type="entry name" value="Cyclin_N"/>
    <property type="match status" value="1"/>
</dbReference>
<dbReference type="SMART" id="SM00385">
    <property type="entry name" value="CYCLIN"/>
    <property type="match status" value="1"/>
</dbReference>
<dbReference type="SMART" id="SM01332">
    <property type="entry name" value="Cyclin_C"/>
    <property type="match status" value="1"/>
</dbReference>
<dbReference type="SUPFAM" id="SSF47954">
    <property type="entry name" value="Cyclin-like"/>
    <property type="match status" value="2"/>
</dbReference>
<dbReference type="PROSITE" id="PS00292">
    <property type="entry name" value="CYCLINS"/>
    <property type="match status" value="1"/>
</dbReference>
<name>CCNE1_MOUSE</name>
<feature type="chain" id="PRO_0000080450" description="G1/S-specific cyclin-E1">
    <location>
        <begin position="1"/>
        <end position="408"/>
    </location>
</feature>
<feature type="region of interest" description="Disordered" evidence="2">
    <location>
        <begin position="1"/>
        <end position="27"/>
    </location>
</feature>
<feature type="region of interest" description="Disordered" evidence="2">
    <location>
        <begin position="379"/>
        <end position="408"/>
    </location>
</feature>
<feature type="compositionally biased region" description="Basic and acidic residues" evidence="2">
    <location>
        <begin position="1"/>
        <end position="17"/>
    </location>
</feature>
<feature type="compositionally biased region" description="Pro residues" evidence="2">
    <location>
        <begin position="385"/>
        <end position="397"/>
    </location>
</feature>
<feature type="modified residue" description="Phosphothreonine" evidence="1">
    <location>
        <position position="74"/>
    </location>
</feature>
<feature type="modified residue" description="Phosphoserine" evidence="1">
    <location>
        <position position="101"/>
    </location>
</feature>
<feature type="modified residue" description="Phosphoserine" evidence="1">
    <location>
        <position position="385"/>
    </location>
</feature>
<feature type="modified residue" description="Phosphothreonine" evidence="1">
    <location>
        <position position="393"/>
    </location>
</feature>
<feature type="modified residue" description="Phosphoserine" evidence="1">
    <location>
        <position position="397"/>
    </location>
</feature>
<feature type="sequence conflict" description="In Ref. 2; AAH84588." evidence="4" ref="2">
    <original>P</original>
    <variation>Q</variation>
    <location>
        <position position="2"/>
    </location>
</feature>
<feature type="sequence conflict" description="In Ref. 1; CAA53482 and 2; AAH62152/AAH84588." evidence="4" ref="1 2">
    <original>H</original>
    <variation>Q</variation>
    <location>
        <position position="179"/>
    </location>
</feature>
<feature type="sequence conflict" description="In Ref. 2; AAH62152." evidence="4" ref="2">
    <original>LE</original>
    <variation>FR</variation>
    <location>
        <begin position="290"/>
        <end position="291"/>
    </location>
</feature>